<name>SYH_FRATH</name>
<proteinExistence type="inferred from homology"/>
<dbReference type="EC" id="6.1.1.21" evidence="1"/>
<dbReference type="EMBL" id="AM233362">
    <property type="protein sequence ID" value="CAJ80246.1"/>
    <property type="molecule type" value="Genomic_DNA"/>
</dbReference>
<dbReference type="RefSeq" id="WP_003017351.1">
    <property type="nucleotide sequence ID" value="NZ_CP009694.1"/>
</dbReference>
<dbReference type="SMR" id="Q2A1H0"/>
<dbReference type="KEGG" id="ftl:FTL_1807"/>
<dbReference type="Proteomes" id="UP000001944">
    <property type="component" value="Chromosome"/>
</dbReference>
<dbReference type="GO" id="GO:0005737">
    <property type="term" value="C:cytoplasm"/>
    <property type="evidence" value="ECO:0007669"/>
    <property type="project" value="UniProtKB-SubCell"/>
</dbReference>
<dbReference type="GO" id="GO:0005524">
    <property type="term" value="F:ATP binding"/>
    <property type="evidence" value="ECO:0007669"/>
    <property type="project" value="UniProtKB-UniRule"/>
</dbReference>
<dbReference type="GO" id="GO:0004821">
    <property type="term" value="F:histidine-tRNA ligase activity"/>
    <property type="evidence" value="ECO:0007669"/>
    <property type="project" value="UniProtKB-UniRule"/>
</dbReference>
<dbReference type="GO" id="GO:0006427">
    <property type="term" value="P:histidyl-tRNA aminoacylation"/>
    <property type="evidence" value="ECO:0007669"/>
    <property type="project" value="UniProtKB-UniRule"/>
</dbReference>
<dbReference type="CDD" id="cd00773">
    <property type="entry name" value="HisRS-like_core"/>
    <property type="match status" value="1"/>
</dbReference>
<dbReference type="FunFam" id="3.30.930.10:FF:000005">
    <property type="entry name" value="Histidine--tRNA ligase"/>
    <property type="match status" value="1"/>
</dbReference>
<dbReference type="Gene3D" id="3.40.50.800">
    <property type="entry name" value="Anticodon-binding domain"/>
    <property type="match status" value="1"/>
</dbReference>
<dbReference type="Gene3D" id="3.30.930.10">
    <property type="entry name" value="Bira Bifunctional Protein, Domain 2"/>
    <property type="match status" value="1"/>
</dbReference>
<dbReference type="HAMAP" id="MF_00127">
    <property type="entry name" value="His_tRNA_synth"/>
    <property type="match status" value="1"/>
</dbReference>
<dbReference type="InterPro" id="IPR006195">
    <property type="entry name" value="aa-tRNA-synth_II"/>
</dbReference>
<dbReference type="InterPro" id="IPR045864">
    <property type="entry name" value="aa-tRNA-synth_II/BPL/LPL"/>
</dbReference>
<dbReference type="InterPro" id="IPR004154">
    <property type="entry name" value="Anticodon-bd"/>
</dbReference>
<dbReference type="InterPro" id="IPR036621">
    <property type="entry name" value="Anticodon-bd_dom_sf"/>
</dbReference>
<dbReference type="InterPro" id="IPR015807">
    <property type="entry name" value="His-tRNA-ligase"/>
</dbReference>
<dbReference type="InterPro" id="IPR041715">
    <property type="entry name" value="HisRS-like_core"/>
</dbReference>
<dbReference type="InterPro" id="IPR004516">
    <property type="entry name" value="HisRS/HisZ"/>
</dbReference>
<dbReference type="NCBIfam" id="TIGR00442">
    <property type="entry name" value="hisS"/>
    <property type="match status" value="1"/>
</dbReference>
<dbReference type="PANTHER" id="PTHR43707:SF1">
    <property type="entry name" value="HISTIDINE--TRNA LIGASE, MITOCHONDRIAL-RELATED"/>
    <property type="match status" value="1"/>
</dbReference>
<dbReference type="PANTHER" id="PTHR43707">
    <property type="entry name" value="HISTIDYL-TRNA SYNTHETASE"/>
    <property type="match status" value="1"/>
</dbReference>
<dbReference type="Pfam" id="PF03129">
    <property type="entry name" value="HGTP_anticodon"/>
    <property type="match status" value="1"/>
</dbReference>
<dbReference type="Pfam" id="PF13393">
    <property type="entry name" value="tRNA-synt_His"/>
    <property type="match status" value="1"/>
</dbReference>
<dbReference type="PIRSF" id="PIRSF001549">
    <property type="entry name" value="His-tRNA_synth"/>
    <property type="match status" value="1"/>
</dbReference>
<dbReference type="SUPFAM" id="SSF52954">
    <property type="entry name" value="Class II aaRS ABD-related"/>
    <property type="match status" value="1"/>
</dbReference>
<dbReference type="SUPFAM" id="SSF55681">
    <property type="entry name" value="Class II aaRS and biotin synthetases"/>
    <property type="match status" value="1"/>
</dbReference>
<dbReference type="PROSITE" id="PS50862">
    <property type="entry name" value="AA_TRNA_LIGASE_II"/>
    <property type="match status" value="1"/>
</dbReference>
<gene>
    <name evidence="1" type="primary">hisS</name>
    <name type="ordered locus">FTL_1807</name>
</gene>
<reference key="1">
    <citation type="submission" date="2006-03" db="EMBL/GenBank/DDBJ databases">
        <title>Complete genome sequence of Francisella tularensis LVS (Live Vaccine Strain).</title>
        <authorList>
            <person name="Chain P."/>
            <person name="Larimer F."/>
            <person name="Land M."/>
            <person name="Stilwagen S."/>
            <person name="Larsson P."/>
            <person name="Bearden S."/>
            <person name="Chu M."/>
            <person name="Oyston P."/>
            <person name="Forsman M."/>
            <person name="Andersson S."/>
            <person name="Lindler L."/>
            <person name="Titball R."/>
            <person name="Garcia E."/>
        </authorList>
    </citation>
    <scope>NUCLEOTIDE SEQUENCE [LARGE SCALE GENOMIC DNA]</scope>
    <source>
        <strain>LVS</strain>
    </source>
</reference>
<protein>
    <recommendedName>
        <fullName evidence="1">Histidine--tRNA ligase</fullName>
        <ecNumber evidence="1">6.1.1.21</ecNumber>
    </recommendedName>
    <alternativeName>
        <fullName evidence="1">Histidyl-tRNA synthetase</fullName>
        <shortName evidence="1">HisRS</shortName>
    </alternativeName>
</protein>
<evidence type="ECO:0000255" key="1">
    <source>
        <dbReference type="HAMAP-Rule" id="MF_00127"/>
    </source>
</evidence>
<organism>
    <name type="scientific">Francisella tularensis subsp. holarctica (strain LVS)</name>
    <dbReference type="NCBI Taxonomy" id="376619"/>
    <lineage>
        <taxon>Bacteria</taxon>
        <taxon>Pseudomonadati</taxon>
        <taxon>Pseudomonadota</taxon>
        <taxon>Gammaproteobacteria</taxon>
        <taxon>Thiotrichales</taxon>
        <taxon>Francisellaceae</taxon>
        <taxon>Francisella</taxon>
    </lineage>
</organism>
<keyword id="KW-0030">Aminoacyl-tRNA synthetase</keyword>
<keyword id="KW-0067">ATP-binding</keyword>
<keyword id="KW-0963">Cytoplasm</keyword>
<keyword id="KW-0436">Ligase</keyword>
<keyword id="KW-0547">Nucleotide-binding</keyword>
<keyword id="KW-0648">Protein biosynthesis</keyword>
<keyword id="KW-1185">Reference proteome</keyword>
<feature type="chain" id="PRO_1000016362" description="Histidine--tRNA ligase">
    <location>
        <begin position="1"/>
        <end position="421"/>
    </location>
</feature>
<sequence>MSKLTIVRGFNDVLPLDSYKWQFLESKVKLILDRYNYSETRLPIVERSELFHRSVGESSDIVSKETYDFQDRNGDSLTLRPEGTAGCVRMVIENNLATRGQTQKLWYCGPMFRYERPQKGRYRQFYQLGVEAYGFDGIAIDLEVIAIAWSLFKELGISEYVTLELNSLGSSLNRQEYTQALLQYLKPYHAELDEDSIKRLDKNPLRILDSKIEKTQKILANAPKLIDFIDHDLRLRFKQTCQYLDALGVRYKLNENLVRGLDYYTGLVFEWTTDKLGSQSAICAGGRYDGLVDNLGGQKTAAIGFAIGMERLLLLLEDLGKLPNQDNACDVFFILDSAQLHQSLAIVENIRQELPQLKIDMDLKFGSFKSQFKKADKSGAKVAIIIGQDELDNGFAGIKFLQQNEEQQQVAFNELINFLER</sequence>
<comment type="catalytic activity">
    <reaction evidence="1">
        <text>tRNA(His) + L-histidine + ATP = L-histidyl-tRNA(His) + AMP + diphosphate + H(+)</text>
        <dbReference type="Rhea" id="RHEA:17313"/>
        <dbReference type="Rhea" id="RHEA-COMP:9665"/>
        <dbReference type="Rhea" id="RHEA-COMP:9689"/>
        <dbReference type="ChEBI" id="CHEBI:15378"/>
        <dbReference type="ChEBI" id="CHEBI:30616"/>
        <dbReference type="ChEBI" id="CHEBI:33019"/>
        <dbReference type="ChEBI" id="CHEBI:57595"/>
        <dbReference type="ChEBI" id="CHEBI:78442"/>
        <dbReference type="ChEBI" id="CHEBI:78527"/>
        <dbReference type="ChEBI" id="CHEBI:456215"/>
        <dbReference type="EC" id="6.1.1.21"/>
    </reaction>
</comment>
<comment type="subunit">
    <text evidence="1">Homodimer.</text>
</comment>
<comment type="subcellular location">
    <subcellularLocation>
        <location evidence="1">Cytoplasm</location>
    </subcellularLocation>
</comment>
<comment type="similarity">
    <text evidence="1">Belongs to the class-II aminoacyl-tRNA synthetase family.</text>
</comment>
<accession>Q2A1H0</accession>